<accession>P19280</accession>
<organism>
    <name type="scientific">Thermoproteus tenax virus 1 (strain KRA1)</name>
    <name type="common">TTV1</name>
    <dbReference type="NCBI Taxonomy" id="10480"/>
    <lineage>
        <taxon>Viruses</taxon>
        <taxon>Adnaviria</taxon>
        <taxon>Zilligvirae</taxon>
        <taxon>Taleaviricota</taxon>
        <taxon>Tokiviricetes</taxon>
        <taxon>Primavirales</taxon>
        <taxon>Tristromaviridae</taxon>
        <taxon>Betatristromavirus</taxon>
        <taxon>Betatristromavirus TTV1</taxon>
    </lineage>
</organism>
<feature type="chain" id="PRO_0000222962" description="Uncharacterized 9.5 kDa protein">
    <location>
        <begin position="1"/>
        <end position="81"/>
    </location>
</feature>
<feature type="region of interest" description="Disordered" evidence="1">
    <location>
        <begin position="55"/>
        <end position="81"/>
    </location>
</feature>
<keyword id="KW-1185">Reference proteome</keyword>
<protein>
    <recommendedName>
        <fullName>Uncharacterized 9.5 kDa protein</fullName>
    </recommendedName>
</protein>
<evidence type="ECO:0000256" key="1">
    <source>
        <dbReference type="SAM" id="MobiDB-lite"/>
    </source>
</evidence>
<sequence length="81" mass="9524">MAELNKAIDKLTYKLAMNYPYTADIAEKLIELGLIRQEKWLKAINDTKRFKDKILDKRNSNNKIEKSENTGENHDNNQDQK</sequence>
<name>YOR5_TTV1K</name>
<reference key="1">
    <citation type="submission" date="1989-03" db="EMBL/GenBank/DDBJ databases">
        <authorList>
            <person name="Neumann H."/>
        </authorList>
    </citation>
    <scope>NUCLEOTIDE SEQUENCE [GENOMIC DNA]</scope>
</reference>
<proteinExistence type="predicted"/>
<organismHost>
    <name type="scientific">Thermoproteus tenax</name>
    <dbReference type="NCBI Taxonomy" id="2271"/>
</organismHost>
<dbReference type="EMBL" id="X14855">
    <property type="protein sequence ID" value="CAA32973.1"/>
    <property type="molecule type" value="Genomic_DNA"/>
</dbReference>
<dbReference type="Proteomes" id="UP000009250">
    <property type="component" value="Genome"/>
</dbReference>